<gene>
    <name type="primary">Csrp2</name>
    <name type="synonym">Smlim</name>
</gene>
<evidence type="ECO:0000250" key="1"/>
<evidence type="ECO:0000250" key="2">
    <source>
        <dbReference type="UniProtKB" id="P21291"/>
    </source>
</evidence>
<evidence type="ECO:0000250" key="3">
    <source>
        <dbReference type="UniProtKB" id="P97314"/>
    </source>
</evidence>
<evidence type="ECO:0000250" key="4">
    <source>
        <dbReference type="UniProtKB" id="P97315"/>
    </source>
</evidence>
<evidence type="ECO:0000250" key="5">
    <source>
        <dbReference type="UniProtKB" id="Q16527"/>
    </source>
</evidence>
<evidence type="ECO:0000255" key="6"/>
<evidence type="ECO:0000255" key="7">
    <source>
        <dbReference type="PROSITE-ProRule" id="PRU00125"/>
    </source>
</evidence>
<reference key="1">
    <citation type="journal article" date="1996" name="J. Biol. Chem.">
        <title>Molecular cloning and characterization of SmLIM, a developmentally regulated LIM protein preferentially expressed in aortic smooth muscle cells.</title>
        <authorList>
            <person name="Jain M."/>
            <person name="Fujita K.P."/>
            <person name="Hsieh C.-M."/>
            <person name="Endege W.O."/>
            <person name="Sibinga N.E.S."/>
            <person name="Yet S.-F."/>
            <person name="Kashiki S."/>
            <person name="Lee W.-S."/>
            <person name="Perrella M.A."/>
            <person name="Haber E."/>
            <person name="Lee M.-E."/>
        </authorList>
    </citation>
    <scope>NUCLEOTIDE SEQUENCE [MRNA]</scope>
    <source>
        <strain>Sprague-Dawley</strain>
        <tissue>Aorta</tissue>
        <tissue>Smooth muscle</tissue>
    </source>
</reference>
<proteinExistence type="evidence at protein level"/>
<protein>
    <recommendedName>
        <fullName>Cysteine and glycine-rich protein 2</fullName>
    </recommendedName>
    <alternativeName>
        <fullName>Cysteine-rich protein 2</fullName>
        <shortName>CRP2</shortName>
    </alternativeName>
    <alternativeName>
        <fullName>Smooth muscle cell LIM protein</fullName>
        <shortName>SmLIM</shortName>
    </alternativeName>
</protein>
<organism>
    <name type="scientific">Rattus norvegicus</name>
    <name type="common">Rat</name>
    <dbReference type="NCBI Taxonomy" id="10116"/>
    <lineage>
        <taxon>Eukaryota</taxon>
        <taxon>Metazoa</taxon>
        <taxon>Chordata</taxon>
        <taxon>Craniata</taxon>
        <taxon>Vertebrata</taxon>
        <taxon>Euteleostomi</taxon>
        <taxon>Mammalia</taxon>
        <taxon>Eutheria</taxon>
        <taxon>Euarchontoglires</taxon>
        <taxon>Glires</taxon>
        <taxon>Rodentia</taxon>
        <taxon>Myomorpha</taxon>
        <taxon>Muroidea</taxon>
        <taxon>Muridae</taxon>
        <taxon>Murinae</taxon>
        <taxon>Rattus</taxon>
    </lineage>
</organism>
<feature type="chain" id="PRO_0000075723" description="Cysteine and glycine-rich protein 2">
    <location>
        <begin position="1"/>
        <end position="193"/>
    </location>
</feature>
<feature type="domain" description="LIM zinc-binding 1" evidence="7">
    <location>
        <begin position="10"/>
        <end position="61"/>
    </location>
</feature>
<feature type="domain" description="LIM zinc-binding 2" evidence="7">
    <location>
        <begin position="119"/>
        <end position="170"/>
    </location>
</feature>
<feature type="short sequence motif" description="Nuclear localization signal" evidence="6">
    <location>
        <begin position="64"/>
        <end position="69"/>
    </location>
</feature>
<feature type="modified residue" description="N6-acetyllysine" evidence="3">
    <location>
        <position position="112"/>
    </location>
</feature>
<feature type="modified residue" description="N6-acetyllysine" evidence="2">
    <location>
        <position position="131"/>
    </location>
</feature>
<feature type="modified residue" description="N6-acetyllysine; alternate" evidence="4">
    <location>
        <position position="137"/>
    </location>
</feature>
<feature type="modified residue" description="N6-succinyllysine; alternate" evidence="3">
    <location>
        <position position="137"/>
    </location>
</feature>
<feature type="modified residue" description="N6-acetyllysine" evidence="4">
    <location>
        <position position="161"/>
    </location>
</feature>
<feature type="cross-link" description="Glycyl lysine isopeptide (Lys-Gly) (interchain with G-Cter in SUMO2)" evidence="5">
    <location>
        <position position="91"/>
    </location>
</feature>
<keyword id="KW-0007">Acetylation</keyword>
<keyword id="KW-0217">Developmental protein</keyword>
<keyword id="KW-0221">Differentiation</keyword>
<keyword id="KW-1017">Isopeptide bond</keyword>
<keyword id="KW-0440">LIM domain</keyword>
<keyword id="KW-0479">Metal-binding</keyword>
<keyword id="KW-0539">Nucleus</keyword>
<keyword id="KW-1185">Reference proteome</keyword>
<keyword id="KW-0677">Repeat</keyword>
<keyword id="KW-0832">Ubl conjugation</keyword>
<keyword id="KW-0862">Zinc</keyword>
<comment type="function">
    <text>Drastically down-regulated in response to PDGF-BB or cell injury, that promote smooth muscle cell proliferation and dedifferentiation. Seems to play a role in the development of the embryonic vascular system.</text>
</comment>
<comment type="subunit">
    <text evidence="1">Interacts with KAT14. The LIM domain 1 is necessary and sufficient for this interaction (By similarity). Interacts with GLRX3 (By similarity).</text>
</comment>
<comment type="interaction">
    <interactant intactId="EBI-918425">
        <id>Q62908</id>
    </interactant>
    <interactant intactId="EBI-1210244">
        <id>Q3TKT4</id>
        <label>Smarca4</label>
    </interactant>
    <organismsDiffer>true</organismsDiffer>
    <experiments>3</experiments>
</comment>
<comment type="subcellular location">
    <subcellularLocation>
        <location>Nucleus</location>
    </subcellularLocation>
</comment>
<comment type="tissue specificity">
    <text>Highly expressed in the aorta; weakly found in the kidney, thymus, and intestine. Barely detectable in brain, testis, esophagus, lung, liver, aortic adventitia, vena cava, or uterus; not present in heart and skeletal muscle.</text>
</comment>
<dbReference type="EMBL" id="U44948">
    <property type="protein sequence ID" value="AAC52554.1"/>
    <property type="molecule type" value="mRNA"/>
</dbReference>
<dbReference type="RefSeq" id="NP_803174.2">
    <property type="nucleotide sequence ID" value="NM_177425.3"/>
</dbReference>
<dbReference type="SMR" id="Q62908"/>
<dbReference type="DIP" id="DIP-36882N"/>
<dbReference type="FunCoup" id="Q62908">
    <property type="interactions" value="122"/>
</dbReference>
<dbReference type="IntAct" id="Q62908">
    <property type="interactions" value="2"/>
</dbReference>
<dbReference type="STRING" id="10116.ENSRNOP00000061356"/>
<dbReference type="iPTMnet" id="Q62908"/>
<dbReference type="PhosphoSitePlus" id="Q62908"/>
<dbReference type="PaxDb" id="10116-ENSRNOP00000061356"/>
<dbReference type="GeneID" id="29317"/>
<dbReference type="KEGG" id="rno:29317"/>
<dbReference type="UCSC" id="RGD:61950">
    <property type="organism name" value="rat"/>
</dbReference>
<dbReference type="AGR" id="RGD:61950"/>
<dbReference type="CTD" id="1466"/>
<dbReference type="RGD" id="61950">
    <property type="gene designation" value="Csrp2"/>
</dbReference>
<dbReference type="eggNOG" id="KOG1700">
    <property type="taxonomic scope" value="Eukaryota"/>
</dbReference>
<dbReference type="InParanoid" id="Q62908"/>
<dbReference type="OrthoDB" id="17606at9989"/>
<dbReference type="PhylomeDB" id="Q62908"/>
<dbReference type="PRO" id="PR:Q62908"/>
<dbReference type="Proteomes" id="UP000002494">
    <property type="component" value="Unplaced"/>
</dbReference>
<dbReference type="GO" id="GO:0005737">
    <property type="term" value="C:cytoplasm"/>
    <property type="evidence" value="ECO:0000318"/>
    <property type="project" value="GO_Central"/>
</dbReference>
<dbReference type="GO" id="GO:0005634">
    <property type="term" value="C:nucleus"/>
    <property type="evidence" value="ECO:0000318"/>
    <property type="project" value="GO_Central"/>
</dbReference>
<dbReference type="GO" id="GO:0030018">
    <property type="term" value="C:Z disc"/>
    <property type="evidence" value="ECO:0000318"/>
    <property type="project" value="GO_Central"/>
</dbReference>
<dbReference type="GO" id="GO:0042805">
    <property type="term" value="F:actinin binding"/>
    <property type="evidence" value="ECO:0000318"/>
    <property type="project" value="GO_Central"/>
</dbReference>
<dbReference type="GO" id="GO:0046872">
    <property type="term" value="F:metal ion binding"/>
    <property type="evidence" value="ECO:0007669"/>
    <property type="project" value="UniProtKB-KW"/>
</dbReference>
<dbReference type="GO" id="GO:0008307">
    <property type="term" value="F:structural constituent of muscle"/>
    <property type="evidence" value="ECO:0000318"/>
    <property type="project" value="GO_Central"/>
</dbReference>
<dbReference type="GO" id="GO:0060537">
    <property type="term" value="P:muscle tissue development"/>
    <property type="evidence" value="ECO:0000318"/>
    <property type="project" value="GO_Central"/>
</dbReference>
<dbReference type="GO" id="GO:0045445">
    <property type="term" value="P:myoblast differentiation"/>
    <property type="evidence" value="ECO:0000270"/>
    <property type="project" value="RGD"/>
</dbReference>
<dbReference type="GO" id="GO:0045214">
    <property type="term" value="P:sarcomere organization"/>
    <property type="evidence" value="ECO:0000318"/>
    <property type="project" value="GO_Central"/>
</dbReference>
<dbReference type="CDD" id="cd09480">
    <property type="entry name" value="LIM1_CRP2"/>
    <property type="match status" value="1"/>
</dbReference>
<dbReference type="CDD" id="cd09840">
    <property type="entry name" value="LIM2_CRP2"/>
    <property type="match status" value="1"/>
</dbReference>
<dbReference type="FunFam" id="2.10.110.10:FF:000001">
    <property type="entry name" value="Cysteine and glycine-rich protein 1"/>
    <property type="match status" value="2"/>
</dbReference>
<dbReference type="Gene3D" id="2.10.110.10">
    <property type="entry name" value="Cysteine Rich Protein"/>
    <property type="match status" value="2"/>
</dbReference>
<dbReference type="InterPro" id="IPR001781">
    <property type="entry name" value="Znf_LIM"/>
</dbReference>
<dbReference type="PANTHER" id="PTHR24215:SF3">
    <property type="entry name" value="CYSTEINE AND GLYCINE-RICH PROTEIN 2"/>
    <property type="match status" value="1"/>
</dbReference>
<dbReference type="PANTHER" id="PTHR24215">
    <property type="entry name" value="RHO-GTPASE-ACTIVATING PROTEIN LRG1"/>
    <property type="match status" value="1"/>
</dbReference>
<dbReference type="Pfam" id="PF00412">
    <property type="entry name" value="LIM"/>
    <property type="match status" value="2"/>
</dbReference>
<dbReference type="SMART" id="SM00132">
    <property type="entry name" value="LIM"/>
    <property type="match status" value="2"/>
</dbReference>
<dbReference type="SUPFAM" id="SSF57716">
    <property type="entry name" value="Glucocorticoid receptor-like (DNA-binding domain)"/>
    <property type="match status" value="4"/>
</dbReference>
<dbReference type="PROSITE" id="PS00478">
    <property type="entry name" value="LIM_DOMAIN_1"/>
    <property type="match status" value="2"/>
</dbReference>
<dbReference type="PROSITE" id="PS50023">
    <property type="entry name" value="LIM_DOMAIN_2"/>
    <property type="match status" value="2"/>
</dbReference>
<accession>Q62908</accession>
<sequence>MPVWGGGNKCGACGRTVYHAEEVQCDGRTFHRCCFLCMVCRKNLDSTTVAIHDEEIYCKSCYGKKYGPKGYGYGQGAGTLNMDRGERLGIKPESAQPHRPTTNPNTSKFAQKYGGAEKCSRCGDSVYAAEKIIGAGKPWHKNCFRCAKCGKSLESTTLTEKEGEIYCKGCYAKNFGPKGFGYGQGAGALVHAQ</sequence>
<name>CSRP2_RAT</name>